<feature type="chain" id="PRO_1000076663" description="Triosephosphate isomerase">
    <location>
        <begin position="1"/>
        <end position="253"/>
    </location>
</feature>
<feature type="active site" description="Electrophile" evidence="1">
    <location>
        <position position="97"/>
    </location>
</feature>
<feature type="active site" description="Proton acceptor" evidence="1">
    <location>
        <position position="169"/>
    </location>
</feature>
<feature type="binding site" evidence="1">
    <location>
        <begin position="9"/>
        <end position="11"/>
    </location>
    <ligand>
        <name>substrate</name>
    </ligand>
</feature>
<feature type="binding site" evidence="1">
    <location>
        <position position="175"/>
    </location>
    <ligand>
        <name>substrate</name>
    </ligand>
</feature>
<feature type="binding site" evidence="1">
    <location>
        <position position="215"/>
    </location>
    <ligand>
        <name>substrate</name>
    </ligand>
</feature>
<feature type="binding site" evidence="1">
    <location>
        <begin position="236"/>
        <end position="237"/>
    </location>
    <ligand>
        <name>substrate</name>
    </ligand>
</feature>
<keyword id="KW-0963">Cytoplasm</keyword>
<keyword id="KW-0312">Gluconeogenesis</keyword>
<keyword id="KW-0324">Glycolysis</keyword>
<keyword id="KW-0413">Isomerase</keyword>
<evidence type="ECO:0000255" key="1">
    <source>
        <dbReference type="HAMAP-Rule" id="MF_00147"/>
    </source>
</evidence>
<gene>
    <name evidence="1" type="primary">tpiA</name>
    <name type="ordered locus">SaurJH1_0815</name>
</gene>
<organism>
    <name type="scientific">Staphylococcus aureus (strain JH1)</name>
    <dbReference type="NCBI Taxonomy" id="359787"/>
    <lineage>
        <taxon>Bacteria</taxon>
        <taxon>Bacillati</taxon>
        <taxon>Bacillota</taxon>
        <taxon>Bacilli</taxon>
        <taxon>Bacillales</taxon>
        <taxon>Staphylococcaceae</taxon>
        <taxon>Staphylococcus</taxon>
    </lineage>
</organism>
<dbReference type="EC" id="5.3.1.1" evidence="1"/>
<dbReference type="EMBL" id="CP000736">
    <property type="protein sequence ID" value="ABR51671.1"/>
    <property type="molecule type" value="Genomic_DNA"/>
</dbReference>
<dbReference type="SMR" id="A6TZQ3"/>
<dbReference type="KEGG" id="sah:SaurJH1_0815"/>
<dbReference type="HOGENOM" id="CLU_024251_2_3_9"/>
<dbReference type="UniPathway" id="UPA00109">
    <property type="reaction ID" value="UER00189"/>
</dbReference>
<dbReference type="UniPathway" id="UPA00138"/>
<dbReference type="GO" id="GO:0005829">
    <property type="term" value="C:cytosol"/>
    <property type="evidence" value="ECO:0007669"/>
    <property type="project" value="TreeGrafter"/>
</dbReference>
<dbReference type="GO" id="GO:0004807">
    <property type="term" value="F:triose-phosphate isomerase activity"/>
    <property type="evidence" value="ECO:0007669"/>
    <property type="project" value="UniProtKB-UniRule"/>
</dbReference>
<dbReference type="GO" id="GO:0006094">
    <property type="term" value="P:gluconeogenesis"/>
    <property type="evidence" value="ECO:0007669"/>
    <property type="project" value="UniProtKB-UniRule"/>
</dbReference>
<dbReference type="GO" id="GO:0046166">
    <property type="term" value="P:glyceraldehyde-3-phosphate biosynthetic process"/>
    <property type="evidence" value="ECO:0007669"/>
    <property type="project" value="TreeGrafter"/>
</dbReference>
<dbReference type="GO" id="GO:0019563">
    <property type="term" value="P:glycerol catabolic process"/>
    <property type="evidence" value="ECO:0007669"/>
    <property type="project" value="TreeGrafter"/>
</dbReference>
<dbReference type="GO" id="GO:0006096">
    <property type="term" value="P:glycolytic process"/>
    <property type="evidence" value="ECO:0007669"/>
    <property type="project" value="UniProtKB-UniRule"/>
</dbReference>
<dbReference type="CDD" id="cd00311">
    <property type="entry name" value="TIM"/>
    <property type="match status" value="1"/>
</dbReference>
<dbReference type="FunFam" id="3.20.20.70:FF:000016">
    <property type="entry name" value="Triosephosphate isomerase"/>
    <property type="match status" value="1"/>
</dbReference>
<dbReference type="Gene3D" id="3.20.20.70">
    <property type="entry name" value="Aldolase class I"/>
    <property type="match status" value="1"/>
</dbReference>
<dbReference type="HAMAP" id="MF_00147_B">
    <property type="entry name" value="TIM_B"/>
    <property type="match status" value="1"/>
</dbReference>
<dbReference type="InterPro" id="IPR013785">
    <property type="entry name" value="Aldolase_TIM"/>
</dbReference>
<dbReference type="InterPro" id="IPR035990">
    <property type="entry name" value="TIM_sf"/>
</dbReference>
<dbReference type="InterPro" id="IPR022896">
    <property type="entry name" value="TrioseP_Isoase_bac/euk"/>
</dbReference>
<dbReference type="InterPro" id="IPR000652">
    <property type="entry name" value="Triosephosphate_isomerase"/>
</dbReference>
<dbReference type="InterPro" id="IPR020861">
    <property type="entry name" value="Triosephosphate_isomerase_AS"/>
</dbReference>
<dbReference type="NCBIfam" id="TIGR00419">
    <property type="entry name" value="tim"/>
    <property type="match status" value="1"/>
</dbReference>
<dbReference type="PANTHER" id="PTHR21139">
    <property type="entry name" value="TRIOSEPHOSPHATE ISOMERASE"/>
    <property type="match status" value="1"/>
</dbReference>
<dbReference type="PANTHER" id="PTHR21139:SF42">
    <property type="entry name" value="TRIOSEPHOSPHATE ISOMERASE"/>
    <property type="match status" value="1"/>
</dbReference>
<dbReference type="Pfam" id="PF00121">
    <property type="entry name" value="TIM"/>
    <property type="match status" value="1"/>
</dbReference>
<dbReference type="SUPFAM" id="SSF51351">
    <property type="entry name" value="Triosephosphate isomerase (TIM)"/>
    <property type="match status" value="1"/>
</dbReference>
<dbReference type="PROSITE" id="PS00171">
    <property type="entry name" value="TIM_1"/>
    <property type="match status" value="1"/>
</dbReference>
<dbReference type="PROSITE" id="PS51440">
    <property type="entry name" value="TIM_2"/>
    <property type="match status" value="1"/>
</dbReference>
<name>TPIS_STAA2</name>
<protein>
    <recommendedName>
        <fullName evidence="1">Triosephosphate isomerase</fullName>
        <shortName evidence="1">TIM</shortName>
        <shortName evidence="1">TPI</shortName>
        <ecNumber evidence="1">5.3.1.1</ecNumber>
    </recommendedName>
    <alternativeName>
        <fullName evidence="1">Triose-phosphate isomerase</fullName>
    </alternativeName>
</protein>
<comment type="function">
    <text evidence="1">Involved in the gluconeogenesis. Catalyzes stereospecifically the conversion of dihydroxyacetone phosphate (DHAP) to D-glyceraldehyde-3-phosphate (G3P).</text>
</comment>
<comment type="catalytic activity">
    <reaction evidence="1">
        <text>D-glyceraldehyde 3-phosphate = dihydroxyacetone phosphate</text>
        <dbReference type="Rhea" id="RHEA:18585"/>
        <dbReference type="ChEBI" id="CHEBI:57642"/>
        <dbReference type="ChEBI" id="CHEBI:59776"/>
        <dbReference type="EC" id="5.3.1.1"/>
    </reaction>
</comment>
<comment type="pathway">
    <text evidence="1">Carbohydrate biosynthesis; gluconeogenesis.</text>
</comment>
<comment type="pathway">
    <text evidence="1">Carbohydrate degradation; glycolysis; D-glyceraldehyde 3-phosphate from glycerone phosphate: step 1/1.</text>
</comment>
<comment type="subunit">
    <text evidence="1">Homodimer.</text>
</comment>
<comment type="subcellular location">
    <subcellularLocation>
        <location evidence="1">Cytoplasm</location>
    </subcellularLocation>
</comment>
<comment type="similarity">
    <text evidence="1">Belongs to the triosephosphate isomerase family.</text>
</comment>
<accession>A6TZQ3</accession>
<proteinExistence type="inferred from homology"/>
<reference key="1">
    <citation type="submission" date="2007-06" db="EMBL/GenBank/DDBJ databases">
        <title>Complete sequence of chromosome of Staphylococcus aureus subsp. aureus JH1.</title>
        <authorList>
            <consortium name="US DOE Joint Genome Institute"/>
            <person name="Copeland A."/>
            <person name="Lucas S."/>
            <person name="Lapidus A."/>
            <person name="Barry K."/>
            <person name="Detter J.C."/>
            <person name="Glavina del Rio T."/>
            <person name="Hammon N."/>
            <person name="Israni S."/>
            <person name="Dalin E."/>
            <person name="Tice H."/>
            <person name="Pitluck S."/>
            <person name="Chain P."/>
            <person name="Malfatti S."/>
            <person name="Shin M."/>
            <person name="Vergez L."/>
            <person name="Schmutz J."/>
            <person name="Larimer F."/>
            <person name="Land M."/>
            <person name="Hauser L."/>
            <person name="Kyrpides N."/>
            <person name="Ivanova N."/>
            <person name="Tomasz A."/>
            <person name="Richardson P."/>
        </authorList>
    </citation>
    <scope>NUCLEOTIDE SEQUENCE [LARGE SCALE GENOMIC DNA]</scope>
    <source>
        <strain>JH1</strain>
    </source>
</reference>
<sequence length="253" mass="27262">MRTPIIAGNWKMNKTVQEAKDFVNALPTLPDSKEVESVICAPAIQLDALTTAVKEGKAQGLEIGAQNTYFEDNGAFTGETSPVALADLGVKYVVIGHSERRELFHETDEEINKKAHAIFKHGMTPIICVGETDEERESGKANDVVGEQVKKAVAGLSEDQLKSVVIAYEPIWAIGTGKSSTSEDANEMCAFVRQTIADLSSKEVSEATRIQYGGSVKPNNIKEYMAQTDIDGALVGGASLKVEDFVQLLEGAK</sequence>